<reference key="1">
    <citation type="submission" date="2008-06" db="EMBL/GenBank/DDBJ databases">
        <title>Lactobacillus casei BL23 complete genome sequence.</title>
        <authorList>
            <person name="Maze A."/>
            <person name="Boel G."/>
            <person name="Bourand A."/>
            <person name="Loux V."/>
            <person name="Gibrat J.F."/>
            <person name="Zuniga M."/>
            <person name="Hartke A."/>
            <person name="Deutscher J."/>
        </authorList>
    </citation>
    <scope>NUCLEOTIDE SEQUENCE [LARGE SCALE GENOMIC DNA]</scope>
    <source>
        <strain>BL23</strain>
    </source>
</reference>
<dbReference type="EC" id="2.4.2.18" evidence="1"/>
<dbReference type="EMBL" id="FM177140">
    <property type="protein sequence ID" value="CAQ65208.1"/>
    <property type="molecule type" value="Genomic_DNA"/>
</dbReference>
<dbReference type="SMR" id="B3W6W9"/>
<dbReference type="KEGG" id="lcb:LCABL_00760"/>
<dbReference type="HOGENOM" id="CLU_034315_2_1_9"/>
<dbReference type="UniPathway" id="UPA00035">
    <property type="reaction ID" value="UER00041"/>
</dbReference>
<dbReference type="GO" id="GO:0005829">
    <property type="term" value="C:cytosol"/>
    <property type="evidence" value="ECO:0007669"/>
    <property type="project" value="TreeGrafter"/>
</dbReference>
<dbReference type="GO" id="GO:0004048">
    <property type="term" value="F:anthranilate phosphoribosyltransferase activity"/>
    <property type="evidence" value="ECO:0007669"/>
    <property type="project" value="UniProtKB-UniRule"/>
</dbReference>
<dbReference type="GO" id="GO:0000287">
    <property type="term" value="F:magnesium ion binding"/>
    <property type="evidence" value="ECO:0007669"/>
    <property type="project" value="UniProtKB-UniRule"/>
</dbReference>
<dbReference type="GO" id="GO:0000162">
    <property type="term" value="P:L-tryptophan biosynthetic process"/>
    <property type="evidence" value="ECO:0007669"/>
    <property type="project" value="UniProtKB-UniRule"/>
</dbReference>
<dbReference type="FunFam" id="3.40.1030.10:FF:000002">
    <property type="entry name" value="Anthranilate phosphoribosyltransferase"/>
    <property type="match status" value="1"/>
</dbReference>
<dbReference type="Gene3D" id="3.40.1030.10">
    <property type="entry name" value="Nucleoside phosphorylase/phosphoribosyltransferase catalytic domain"/>
    <property type="match status" value="1"/>
</dbReference>
<dbReference type="Gene3D" id="1.20.970.10">
    <property type="entry name" value="Transferase, Pyrimidine Nucleoside Phosphorylase, Chain C"/>
    <property type="match status" value="1"/>
</dbReference>
<dbReference type="HAMAP" id="MF_00211">
    <property type="entry name" value="TrpD"/>
    <property type="match status" value="1"/>
</dbReference>
<dbReference type="InterPro" id="IPR005940">
    <property type="entry name" value="Anthranilate_Pribosyl_Tfrase"/>
</dbReference>
<dbReference type="InterPro" id="IPR000312">
    <property type="entry name" value="Glycosyl_Trfase_fam3"/>
</dbReference>
<dbReference type="InterPro" id="IPR017459">
    <property type="entry name" value="Glycosyl_Trfase_fam3_N_dom"/>
</dbReference>
<dbReference type="InterPro" id="IPR036320">
    <property type="entry name" value="Glycosyl_Trfase_fam3_N_dom_sf"/>
</dbReference>
<dbReference type="InterPro" id="IPR035902">
    <property type="entry name" value="Nuc_phospho_transferase"/>
</dbReference>
<dbReference type="NCBIfam" id="TIGR01245">
    <property type="entry name" value="trpD"/>
    <property type="match status" value="1"/>
</dbReference>
<dbReference type="PANTHER" id="PTHR43285">
    <property type="entry name" value="ANTHRANILATE PHOSPHORIBOSYLTRANSFERASE"/>
    <property type="match status" value="1"/>
</dbReference>
<dbReference type="PANTHER" id="PTHR43285:SF2">
    <property type="entry name" value="ANTHRANILATE PHOSPHORIBOSYLTRANSFERASE"/>
    <property type="match status" value="1"/>
</dbReference>
<dbReference type="Pfam" id="PF02885">
    <property type="entry name" value="Glycos_trans_3N"/>
    <property type="match status" value="1"/>
</dbReference>
<dbReference type="Pfam" id="PF00591">
    <property type="entry name" value="Glycos_transf_3"/>
    <property type="match status" value="1"/>
</dbReference>
<dbReference type="SUPFAM" id="SSF52418">
    <property type="entry name" value="Nucleoside phosphorylase/phosphoribosyltransferase catalytic domain"/>
    <property type="match status" value="1"/>
</dbReference>
<dbReference type="SUPFAM" id="SSF47648">
    <property type="entry name" value="Nucleoside phosphorylase/phosphoribosyltransferase N-terminal domain"/>
    <property type="match status" value="1"/>
</dbReference>
<accession>B3W6W9</accession>
<comment type="function">
    <text evidence="1">Catalyzes the transfer of the phosphoribosyl group of 5-phosphorylribose-1-pyrophosphate (PRPP) to anthranilate to yield N-(5'-phosphoribosyl)-anthranilate (PRA).</text>
</comment>
<comment type="catalytic activity">
    <reaction evidence="1">
        <text>N-(5-phospho-beta-D-ribosyl)anthranilate + diphosphate = 5-phospho-alpha-D-ribose 1-diphosphate + anthranilate</text>
        <dbReference type="Rhea" id="RHEA:11768"/>
        <dbReference type="ChEBI" id="CHEBI:16567"/>
        <dbReference type="ChEBI" id="CHEBI:18277"/>
        <dbReference type="ChEBI" id="CHEBI:33019"/>
        <dbReference type="ChEBI" id="CHEBI:58017"/>
        <dbReference type="EC" id="2.4.2.18"/>
    </reaction>
</comment>
<comment type="cofactor">
    <cofactor evidence="1">
        <name>Mg(2+)</name>
        <dbReference type="ChEBI" id="CHEBI:18420"/>
    </cofactor>
    <text evidence="1">Binds 2 magnesium ions per monomer.</text>
</comment>
<comment type="pathway">
    <text evidence="1">Amino-acid biosynthesis; L-tryptophan biosynthesis; L-tryptophan from chorismate: step 2/5.</text>
</comment>
<comment type="subunit">
    <text evidence="1">Homodimer.</text>
</comment>
<comment type="similarity">
    <text evidence="1">Belongs to the anthranilate phosphoribosyltransferase family.</text>
</comment>
<name>TRPD_LACCB</name>
<sequence>MIKQAIEKVVNHENLTFEESEAVLDEIMNGEAYEVQTASLLTALTAKNPTIDEIAGAAASMRSHALAFPETKDVLEIVGTGGDHANTFNISTTSAIVVAATGTQVAKHGNRAASSKSGAADVLEALGLDINETPAVSYESLQENNLAFLFAQEYHKSMKYVAPVRKQLGFRTIFNILGPLANPAHPTHQLLGVYDETLLEPLANVLKKLGVTNAMVVHGRDGLDEMTTADETAVVELQDDHLTKYTVTPEQFGLKRRQRADLVGGTPEANANITRRILAGDHGPQRDIVLLNAGAALHVAHPDLSIQAGIDLAAKTIDDGKAFEELNRLLAFSDKRKDVVA</sequence>
<protein>
    <recommendedName>
        <fullName evidence="1">Anthranilate phosphoribosyltransferase</fullName>
        <ecNumber evidence="1">2.4.2.18</ecNumber>
    </recommendedName>
</protein>
<proteinExistence type="inferred from homology"/>
<feature type="chain" id="PRO_1000099814" description="Anthranilate phosphoribosyltransferase">
    <location>
        <begin position="1"/>
        <end position="341"/>
    </location>
</feature>
<feature type="binding site" evidence="1">
    <location>
        <position position="79"/>
    </location>
    <ligand>
        <name>5-phospho-alpha-D-ribose 1-diphosphate</name>
        <dbReference type="ChEBI" id="CHEBI:58017"/>
    </ligand>
</feature>
<feature type="binding site" evidence="1">
    <location>
        <position position="79"/>
    </location>
    <ligand>
        <name>anthranilate</name>
        <dbReference type="ChEBI" id="CHEBI:16567"/>
        <label>1</label>
    </ligand>
</feature>
<feature type="binding site" evidence="1">
    <location>
        <begin position="82"/>
        <end position="83"/>
    </location>
    <ligand>
        <name>5-phospho-alpha-D-ribose 1-diphosphate</name>
        <dbReference type="ChEBI" id="CHEBI:58017"/>
    </ligand>
</feature>
<feature type="binding site" evidence="1">
    <location>
        <position position="87"/>
    </location>
    <ligand>
        <name>5-phospho-alpha-D-ribose 1-diphosphate</name>
        <dbReference type="ChEBI" id="CHEBI:58017"/>
    </ligand>
</feature>
<feature type="binding site" evidence="1">
    <location>
        <begin position="89"/>
        <end position="92"/>
    </location>
    <ligand>
        <name>5-phospho-alpha-D-ribose 1-diphosphate</name>
        <dbReference type="ChEBI" id="CHEBI:58017"/>
    </ligand>
</feature>
<feature type="binding site" evidence="1">
    <location>
        <position position="91"/>
    </location>
    <ligand>
        <name>Mg(2+)</name>
        <dbReference type="ChEBI" id="CHEBI:18420"/>
        <label>1</label>
    </ligand>
</feature>
<feature type="binding site" evidence="1">
    <location>
        <begin position="107"/>
        <end position="115"/>
    </location>
    <ligand>
        <name>5-phospho-alpha-D-ribose 1-diphosphate</name>
        <dbReference type="ChEBI" id="CHEBI:58017"/>
    </ligand>
</feature>
<feature type="binding site" evidence="1">
    <location>
        <position position="110"/>
    </location>
    <ligand>
        <name>anthranilate</name>
        <dbReference type="ChEBI" id="CHEBI:16567"/>
        <label>1</label>
    </ligand>
</feature>
<feature type="binding site" evidence="1">
    <location>
        <position position="119"/>
    </location>
    <ligand>
        <name>5-phospho-alpha-D-ribose 1-diphosphate</name>
        <dbReference type="ChEBI" id="CHEBI:58017"/>
    </ligand>
</feature>
<feature type="binding site" evidence="1">
    <location>
        <position position="165"/>
    </location>
    <ligand>
        <name>anthranilate</name>
        <dbReference type="ChEBI" id="CHEBI:16567"/>
        <label>2</label>
    </ligand>
</feature>
<feature type="binding site" evidence="1">
    <location>
        <position position="224"/>
    </location>
    <ligand>
        <name>Mg(2+)</name>
        <dbReference type="ChEBI" id="CHEBI:18420"/>
        <label>2</label>
    </ligand>
</feature>
<feature type="binding site" evidence="1">
    <location>
        <position position="225"/>
    </location>
    <ligand>
        <name>Mg(2+)</name>
        <dbReference type="ChEBI" id="CHEBI:18420"/>
        <label>1</label>
    </ligand>
</feature>
<feature type="binding site" evidence="1">
    <location>
        <position position="225"/>
    </location>
    <ligand>
        <name>Mg(2+)</name>
        <dbReference type="ChEBI" id="CHEBI:18420"/>
        <label>2</label>
    </ligand>
</feature>
<evidence type="ECO:0000255" key="1">
    <source>
        <dbReference type="HAMAP-Rule" id="MF_00211"/>
    </source>
</evidence>
<organism>
    <name type="scientific">Lacticaseibacillus casei (strain BL23)</name>
    <name type="common">Lactobacillus casei</name>
    <dbReference type="NCBI Taxonomy" id="543734"/>
    <lineage>
        <taxon>Bacteria</taxon>
        <taxon>Bacillati</taxon>
        <taxon>Bacillota</taxon>
        <taxon>Bacilli</taxon>
        <taxon>Lactobacillales</taxon>
        <taxon>Lactobacillaceae</taxon>
        <taxon>Lacticaseibacillus</taxon>
    </lineage>
</organism>
<keyword id="KW-0028">Amino-acid biosynthesis</keyword>
<keyword id="KW-0057">Aromatic amino acid biosynthesis</keyword>
<keyword id="KW-0328">Glycosyltransferase</keyword>
<keyword id="KW-0460">Magnesium</keyword>
<keyword id="KW-0479">Metal-binding</keyword>
<keyword id="KW-0808">Transferase</keyword>
<keyword id="KW-0822">Tryptophan biosynthesis</keyword>
<gene>
    <name evidence="1" type="primary">trpD</name>
    <name type="ordered locus">LCABL_00760</name>
</gene>